<evidence type="ECO:0000255" key="1">
    <source>
        <dbReference type="HAMAP-Rule" id="MF_00649"/>
    </source>
</evidence>
<comment type="function">
    <text evidence="1">Inhibits all the catalytic activities of DNA gyrase by preventing its interaction with DNA. Acts by binding directly to the C-terminal domain of GyrB, which probably disrupts DNA binding by the gyrase.</text>
</comment>
<comment type="cofactor">
    <cofactor evidence="1">
        <name>Zn(2+)</name>
        <dbReference type="ChEBI" id="CHEBI:29105"/>
    </cofactor>
    <text evidence="1">Binds 1 zinc ion.</text>
</comment>
<comment type="subunit">
    <text evidence="1">Interacts with GyrB.</text>
</comment>
<comment type="similarity">
    <text evidence="1">Belongs to the DNA gyrase inhibitor YacG family.</text>
</comment>
<sequence length="63" mass="7050">MSDVTVVNCPTCGKPVVWGEISPFRPFCSKRCQLIDLGEWAAEEKRIASSGDQSDSDDWSEER</sequence>
<feature type="chain" id="PRO_1000130975" description="DNA gyrase inhibitor YacG">
    <location>
        <begin position="1"/>
        <end position="63"/>
    </location>
</feature>
<feature type="binding site" evidence="1">
    <location>
        <position position="9"/>
    </location>
    <ligand>
        <name>Zn(2+)</name>
        <dbReference type="ChEBI" id="CHEBI:29105"/>
    </ligand>
</feature>
<feature type="binding site" evidence="1">
    <location>
        <position position="12"/>
    </location>
    <ligand>
        <name>Zn(2+)</name>
        <dbReference type="ChEBI" id="CHEBI:29105"/>
    </ligand>
</feature>
<feature type="binding site" evidence="1">
    <location>
        <position position="28"/>
    </location>
    <ligand>
        <name>Zn(2+)</name>
        <dbReference type="ChEBI" id="CHEBI:29105"/>
    </ligand>
</feature>
<feature type="binding site" evidence="1">
    <location>
        <position position="32"/>
    </location>
    <ligand>
        <name>Zn(2+)</name>
        <dbReference type="ChEBI" id="CHEBI:29105"/>
    </ligand>
</feature>
<gene>
    <name evidence="1" type="primary">yacG</name>
    <name type="ordered locus">SeHA_C0151</name>
</gene>
<reference key="1">
    <citation type="journal article" date="2011" name="J. Bacteriol.">
        <title>Comparative genomics of 28 Salmonella enterica isolates: evidence for CRISPR-mediated adaptive sublineage evolution.</title>
        <authorList>
            <person name="Fricke W.F."/>
            <person name="Mammel M.K."/>
            <person name="McDermott P.F."/>
            <person name="Tartera C."/>
            <person name="White D.G."/>
            <person name="Leclerc J.E."/>
            <person name="Ravel J."/>
            <person name="Cebula T.A."/>
        </authorList>
    </citation>
    <scope>NUCLEOTIDE SEQUENCE [LARGE SCALE GENOMIC DNA]</scope>
    <source>
        <strain>SL476</strain>
    </source>
</reference>
<keyword id="KW-0479">Metal-binding</keyword>
<keyword id="KW-0862">Zinc</keyword>
<dbReference type="EMBL" id="CP001120">
    <property type="protein sequence ID" value="ACF67122.1"/>
    <property type="molecule type" value="Genomic_DNA"/>
</dbReference>
<dbReference type="RefSeq" id="WP_001286419.1">
    <property type="nucleotide sequence ID" value="NC_011083.1"/>
</dbReference>
<dbReference type="SMR" id="B4TJ97"/>
<dbReference type="KEGG" id="seh:SeHA_C0151"/>
<dbReference type="HOGENOM" id="CLU_178280_3_1_6"/>
<dbReference type="Proteomes" id="UP000001866">
    <property type="component" value="Chromosome"/>
</dbReference>
<dbReference type="GO" id="GO:0008657">
    <property type="term" value="F:DNA topoisomerase type II (double strand cut, ATP-hydrolyzing) inhibitor activity"/>
    <property type="evidence" value="ECO:0007669"/>
    <property type="project" value="UniProtKB-UniRule"/>
</dbReference>
<dbReference type="GO" id="GO:0008270">
    <property type="term" value="F:zinc ion binding"/>
    <property type="evidence" value="ECO:0007669"/>
    <property type="project" value="UniProtKB-UniRule"/>
</dbReference>
<dbReference type="GO" id="GO:0006355">
    <property type="term" value="P:regulation of DNA-templated transcription"/>
    <property type="evidence" value="ECO:0007669"/>
    <property type="project" value="InterPro"/>
</dbReference>
<dbReference type="Gene3D" id="3.30.50.10">
    <property type="entry name" value="Erythroid Transcription Factor GATA-1, subunit A"/>
    <property type="match status" value="1"/>
</dbReference>
<dbReference type="HAMAP" id="MF_00649">
    <property type="entry name" value="DNA_gyrase_inhibitor_YacG"/>
    <property type="match status" value="1"/>
</dbReference>
<dbReference type="InterPro" id="IPR005584">
    <property type="entry name" value="DNA_gyrase_inhibitor_YacG"/>
</dbReference>
<dbReference type="InterPro" id="IPR013088">
    <property type="entry name" value="Znf_NHR/GATA"/>
</dbReference>
<dbReference type="NCBIfam" id="NF001638">
    <property type="entry name" value="PRK00418.1"/>
    <property type="match status" value="1"/>
</dbReference>
<dbReference type="PANTHER" id="PTHR36150">
    <property type="entry name" value="DNA GYRASE INHIBITOR YACG"/>
    <property type="match status" value="1"/>
</dbReference>
<dbReference type="PANTHER" id="PTHR36150:SF1">
    <property type="entry name" value="DNA GYRASE INHIBITOR YACG"/>
    <property type="match status" value="1"/>
</dbReference>
<dbReference type="Pfam" id="PF03884">
    <property type="entry name" value="YacG"/>
    <property type="match status" value="1"/>
</dbReference>
<dbReference type="SUPFAM" id="SSF57716">
    <property type="entry name" value="Glucocorticoid receptor-like (DNA-binding domain)"/>
    <property type="match status" value="1"/>
</dbReference>
<name>YACG_SALHS</name>
<organism>
    <name type="scientific">Salmonella heidelberg (strain SL476)</name>
    <dbReference type="NCBI Taxonomy" id="454169"/>
    <lineage>
        <taxon>Bacteria</taxon>
        <taxon>Pseudomonadati</taxon>
        <taxon>Pseudomonadota</taxon>
        <taxon>Gammaproteobacteria</taxon>
        <taxon>Enterobacterales</taxon>
        <taxon>Enterobacteriaceae</taxon>
        <taxon>Salmonella</taxon>
    </lineage>
</organism>
<protein>
    <recommendedName>
        <fullName evidence="1">DNA gyrase inhibitor YacG</fullName>
    </recommendedName>
</protein>
<proteinExistence type="inferred from homology"/>
<accession>B4TJ97</accession>